<reference key="1">
    <citation type="journal article" date="2007" name="J. Bacteriol.">
        <title>Complete genome sequence of Haemophilus somnus (Histophilus somni) strain 129Pt and comparison to Haemophilus ducreyi 35000HP and Haemophilus influenzae Rd.</title>
        <authorList>
            <person name="Challacombe J.F."/>
            <person name="Duncan A.J."/>
            <person name="Brettin T.S."/>
            <person name="Bruce D."/>
            <person name="Chertkov O."/>
            <person name="Detter J.C."/>
            <person name="Han C.S."/>
            <person name="Misra M."/>
            <person name="Richardson P."/>
            <person name="Tapia R."/>
            <person name="Thayer N."/>
            <person name="Xie G."/>
            <person name="Inzana T.J."/>
        </authorList>
    </citation>
    <scope>NUCLEOTIDE SEQUENCE [LARGE SCALE GENOMIC DNA]</scope>
    <source>
        <strain>129Pt</strain>
    </source>
</reference>
<proteinExistence type="inferred from homology"/>
<evidence type="ECO:0000255" key="1">
    <source>
        <dbReference type="HAMAP-Rule" id="MF_00014"/>
    </source>
</evidence>
<dbReference type="EMBL" id="CP000436">
    <property type="protein sequence ID" value="ABI24572.1"/>
    <property type="molecule type" value="Genomic_DNA"/>
</dbReference>
<dbReference type="SMR" id="Q0I1J9"/>
<dbReference type="KEGG" id="hso:HS_0294"/>
<dbReference type="eggNOG" id="COG0806">
    <property type="taxonomic scope" value="Bacteria"/>
</dbReference>
<dbReference type="HOGENOM" id="CLU_077636_1_0_6"/>
<dbReference type="GO" id="GO:0005737">
    <property type="term" value="C:cytoplasm"/>
    <property type="evidence" value="ECO:0007669"/>
    <property type="project" value="UniProtKB-SubCell"/>
</dbReference>
<dbReference type="GO" id="GO:0005840">
    <property type="term" value="C:ribosome"/>
    <property type="evidence" value="ECO:0007669"/>
    <property type="project" value="InterPro"/>
</dbReference>
<dbReference type="GO" id="GO:0043022">
    <property type="term" value="F:ribosome binding"/>
    <property type="evidence" value="ECO:0007669"/>
    <property type="project" value="InterPro"/>
</dbReference>
<dbReference type="GO" id="GO:0042274">
    <property type="term" value="P:ribosomal small subunit biogenesis"/>
    <property type="evidence" value="ECO:0007669"/>
    <property type="project" value="UniProtKB-UniRule"/>
</dbReference>
<dbReference type="GO" id="GO:0006364">
    <property type="term" value="P:rRNA processing"/>
    <property type="evidence" value="ECO:0007669"/>
    <property type="project" value="UniProtKB-UniRule"/>
</dbReference>
<dbReference type="Gene3D" id="2.30.30.240">
    <property type="entry name" value="PRC-barrel domain"/>
    <property type="match status" value="1"/>
</dbReference>
<dbReference type="Gene3D" id="2.40.30.60">
    <property type="entry name" value="RimM"/>
    <property type="match status" value="1"/>
</dbReference>
<dbReference type="HAMAP" id="MF_00014">
    <property type="entry name" value="Ribosome_mat_RimM"/>
    <property type="match status" value="1"/>
</dbReference>
<dbReference type="InterPro" id="IPR011033">
    <property type="entry name" value="PRC_barrel-like_sf"/>
</dbReference>
<dbReference type="InterPro" id="IPR056792">
    <property type="entry name" value="PRC_RimM"/>
</dbReference>
<dbReference type="InterPro" id="IPR011961">
    <property type="entry name" value="RimM"/>
</dbReference>
<dbReference type="InterPro" id="IPR002676">
    <property type="entry name" value="RimM_N"/>
</dbReference>
<dbReference type="InterPro" id="IPR036976">
    <property type="entry name" value="RimM_N_sf"/>
</dbReference>
<dbReference type="InterPro" id="IPR009000">
    <property type="entry name" value="Transl_B-barrel_sf"/>
</dbReference>
<dbReference type="NCBIfam" id="TIGR02273">
    <property type="entry name" value="16S_RimM"/>
    <property type="match status" value="1"/>
</dbReference>
<dbReference type="PANTHER" id="PTHR33692">
    <property type="entry name" value="RIBOSOME MATURATION FACTOR RIMM"/>
    <property type="match status" value="1"/>
</dbReference>
<dbReference type="PANTHER" id="PTHR33692:SF1">
    <property type="entry name" value="RIBOSOME MATURATION FACTOR RIMM"/>
    <property type="match status" value="1"/>
</dbReference>
<dbReference type="Pfam" id="PF24986">
    <property type="entry name" value="PRC_RimM"/>
    <property type="match status" value="1"/>
</dbReference>
<dbReference type="Pfam" id="PF01782">
    <property type="entry name" value="RimM"/>
    <property type="match status" value="1"/>
</dbReference>
<dbReference type="SUPFAM" id="SSF50346">
    <property type="entry name" value="PRC-barrel domain"/>
    <property type="match status" value="1"/>
</dbReference>
<dbReference type="SUPFAM" id="SSF50447">
    <property type="entry name" value="Translation proteins"/>
    <property type="match status" value="1"/>
</dbReference>
<gene>
    <name evidence="1" type="primary">rimM</name>
    <name type="ordered locus">HS_0294</name>
</gene>
<keyword id="KW-0143">Chaperone</keyword>
<keyword id="KW-0963">Cytoplasm</keyword>
<keyword id="KW-0690">Ribosome biogenesis</keyword>
<keyword id="KW-0698">rRNA processing</keyword>
<organism>
    <name type="scientific">Histophilus somni (strain 129Pt)</name>
    <name type="common">Haemophilus somnus</name>
    <dbReference type="NCBI Taxonomy" id="205914"/>
    <lineage>
        <taxon>Bacteria</taxon>
        <taxon>Pseudomonadati</taxon>
        <taxon>Pseudomonadota</taxon>
        <taxon>Gammaproteobacteria</taxon>
        <taxon>Pasteurellales</taxon>
        <taxon>Pasteurellaceae</taxon>
        <taxon>Histophilus</taxon>
    </lineage>
</organism>
<comment type="function">
    <text evidence="1">An accessory protein needed during the final step in the assembly of 30S ribosomal subunit, possibly for assembly of the head region. Essential for efficient processing of 16S rRNA. May be needed both before and after RbfA during the maturation of 16S rRNA. It has affinity for free ribosomal 30S subunits but not for 70S ribosomes.</text>
</comment>
<comment type="subunit">
    <text evidence="1">Binds ribosomal protein uS19.</text>
</comment>
<comment type="subcellular location">
    <subcellularLocation>
        <location evidence="1">Cytoplasm</location>
    </subcellularLocation>
</comment>
<comment type="domain">
    <text evidence="1">The PRC barrel domain binds ribosomal protein uS19.</text>
</comment>
<comment type="similarity">
    <text evidence="1">Belongs to the RimM family.</text>
</comment>
<accession>Q0I1J9</accession>
<protein>
    <recommendedName>
        <fullName evidence="1">Ribosome maturation factor RimM</fullName>
    </recommendedName>
</protein>
<feature type="chain" id="PRO_1000070960" description="Ribosome maturation factor RimM">
    <location>
        <begin position="1"/>
        <end position="175"/>
    </location>
</feature>
<feature type="domain" description="PRC barrel" evidence="1">
    <location>
        <begin position="96"/>
        <end position="175"/>
    </location>
</feature>
<sequence>MEQQRIEVVGKLGSTYGIRGWLRLYSSTEQAESIFDYQPWFLKIKGQWQPIELESWKFHNHELIVKLKGINEREVAQTLANVEIGVNLSVFPLLDEGDFYWHDLIGCQVVNLQGYAMGVVSEMMETGANDVLVVRASTKDAFGKKERLIPFLYEQVVKRVDLSSKTIEVDWDAGF</sequence>
<name>RIMM_HISS1</name>